<protein>
    <recommendedName>
        <fullName>Ras guanine nucleotide exchange factor R</fullName>
    </recommendedName>
    <alternativeName>
        <fullName>RasGEF domain-containing protein R</fullName>
    </alternativeName>
</protein>
<accession>Q8SSQ0</accession>
<accession>Q555R4</accession>
<evidence type="ECO:0000255" key="1"/>
<evidence type="ECO:0000255" key="2">
    <source>
        <dbReference type="PROSITE-ProRule" id="PRU00135"/>
    </source>
</evidence>
<evidence type="ECO:0000255" key="3">
    <source>
        <dbReference type="PROSITE-ProRule" id="PRU00168"/>
    </source>
</evidence>
<evidence type="ECO:0000256" key="4">
    <source>
        <dbReference type="SAM" id="MobiDB-lite"/>
    </source>
</evidence>
<evidence type="ECO:0000269" key="5">
    <source>
    </source>
</evidence>
<evidence type="ECO:0000269" key="6">
    <source>
    </source>
</evidence>
<evidence type="ECO:0000269" key="7">
    <source>
    </source>
</evidence>
<evidence type="ECO:0000305" key="8">
    <source>
    </source>
</evidence>
<dbReference type="EMBL" id="AY160106">
    <property type="protein sequence ID" value="AAN46886.1"/>
    <property type="molecule type" value="Genomic_DNA"/>
</dbReference>
<dbReference type="EMBL" id="AAFI02000012">
    <property type="protein sequence ID" value="EAL70195.1"/>
    <property type="molecule type" value="Genomic_DNA"/>
</dbReference>
<dbReference type="RefSeq" id="XP_643999.1">
    <property type="nucleotide sequence ID" value="XM_638907.1"/>
</dbReference>
<dbReference type="SMR" id="Q8SSQ0"/>
<dbReference type="FunCoup" id="Q8SSQ0">
    <property type="interactions" value="77"/>
</dbReference>
<dbReference type="STRING" id="44689.Q8SSQ0"/>
<dbReference type="GlyGen" id="Q8SSQ0">
    <property type="glycosylation" value="2 sites"/>
</dbReference>
<dbReference type="PaxDb" id="44689-DDB0185198"/>
<dbReference type="EnsemblProtists" id="EAL70195">
    <property type="protein sequence ID" value="EAL70195"/>
    <property type="gene ID" value="DDB_G0274605"/>
</dbReference>
<dbReference type="GeneID" id="8619425"/>
<dbReference type="KEGG" id="ddi:DDB_G0274605"/>
<dbReference type="dictyBase" id="DDB_G0274605">
    <property type="gene designation" value="gefR"/>
</dbReference>
<dbReference type="VEuPathDB" id="AmoebaDB:DDB_G0274605"/>
<dbReference type="eggNOG" id="KOG3417">
    <property type="taxonomic scope" value="Eukaryota"/>
</dbReference>
<dbReference type="HOGENOM" id="CLU_240268_0_0_1"/>
<dbReference type="InParanoid" id="Q8SSQ0"/>
<dbReference type="OMA" id="QKRELIC"/>
<dbReference type="Reactome" id="R-DDI-193648">
    <property type="pathway name" value="NRAGE signals death through JNK"/>
</dbReference>
<dbReference type="Reactome" id="R-DDI-9013148">
    <property type="pathway name" value="CDC42 GTPase cycle"/>
</dbReference>
<dbReference type="Reactome" id="R-DDI-9013149">
    <property type="pathway name" value="RAC1 GTPase cycle"/>
</dbReference>
<dbReference type="PRO" id="PR:Q8SSQ0"/>
<dbReference type="Proteomes" id="UP000002195">
    <property type="component" value="Chromosome 2"/>
</dbReference>
<dbReference type="GO" id="GO:0005886">
    <property type="term" value="C:plasma membrane"/>
    <property type="evidence" value="ECO:0000318"/>
    <property type="project" value="GO_Central"/>
</dbReference>
<dbReference type="GO" id="GO:0005085">
    <property type="term" value="F:guanyl-nucleotide exchange factor activity"/>
    <property type="evidence" value="ECO:0000314"/>
    <property type="project" value="dictyBase"/>
</dbReference>
<dbReference type="GO" id="GO:0007265">
    <property type="term" value="P:Ras protein signal transduction"/>
    <property type="evidence" value="ECO:0000314"/>
    <property type="project" value="dictyBase"/>
</dbReference>
<dbReference type="GO" id="GO:1903013">
    <property type="term" value="P:response to differentiation-inducing factor 1"/>
    <property type="evidence" value="ECO:0007005"/>
    <property type="project" value="dictyBase"/>
</dbReference>
<dbReference type="CDD" id="cd00155">
    <property type="entry name" value="RasGEF"/>
    <property type="match status" value="1"/>
</dbReference>
<dbReference type="CDD" id="cd06224">
    <property type="entry name" value="REM"/>
    <property type="match status" value="1"/>
</dbReference>
<dbReference type="FunFam" id="1.10.840.10:FF:000009">
    <property type="entry name" value="rap guanine nucleotide exchange factor 1"/>
    <property type="match status" value="1"/>
</dbReference>
<dbReference type="Gene3D" id="1.10.840.10">
    <property type="entry name" value="Ras guanine-nucleotide exchange factors catalytic domain"/>
    <property type="match status" value="1"/>
</dbReference>
<dbReference type="Gene3D" id="1.20.870.10">
    <property type="entry name" value="Son of sevenless (SoS) protein Chain: S domain 1"/>
    <property type="match status" value="1"/>
</dbReference>
<dbReference type="InterPro" id="IPR008937">
    <property type="entry name" value="Ras-like_GEF"/>
</dbReference>
<dbReference type="InterPro" id="IPR000651">
    <property type="entry name" value="Ras-like_Gua-exchang_fac_N"/>
</dbReference>
<dbReference type="InterPro" id="IPR023578">
    <property type="entry name" value="Ras_GEF_dom_sf"/>
</dbReference>
<dbReference type="InterPro" id="IPR001895">
    <property type="entry name" value="RASGEF_cat_dom"/>
</dbReference>
<dbReference type="InterPro" id="IPR036964">
    <property type="entry name" value="RASGEF_cat_dom_sf"/>
</dbReference>
<dbReference type="PANTHER" id="PTHR23113">
    <property type="entry name" value="GUANINE NUCLEOTIDE EXCHANGE FACTOR"/>
    <property type="match status" value="1"/>
</dbReference>
<dbReference type="PANTHER" id="PTHR23113:SF366">
    <property type="entry name" value="RAS GUANINE NUCLEOTIDE EXCHANGE FACTOR R"/>
    <property type="match status" value="1"/>
</dbReference>
<dbReference type="Pfam" id="PF00617">
    <property type="entry name" value="RasGEF"/>
    <property type="match status" value="1"/>
</dbReference>
<dbReference type="Pfam" id="PF00618">
    <property type="entry name" value="RasGEF_N"/>
    <property type="match status" value="1"/>
</dbReference>
<dbReference type="SMART" id="SM00147">
    <property type="entry name" value="RasGEF"/>
    <property type="match status" value="1"/>
</dbReference>
<dbReference type="SMART" id="SM00229">
    <property type="entry name" value="RasGEFN"/>
    <property type="match status" value="1"/>
</dbReference>
<dbReference type="SUPFAM" id="SSF48366">
    <property type="entry name" value="Ras GEF"/>
    <property type="match status" value="1"/>
</dbReference>
<dbReference type="PROSITE" id="PS50009">
    <property type="entry name" value="RASGEF_CAT"/>
    <property type="match status" value="1"/>
</dbReference>
<dbReference type="PROSITE" id="PS50212">
    <property type="entry name" value="RASGEF_NTER"/>
    <property type="match status" value="1"/>
</dbReference>
<organism>
    <name type="scientific">Dictyostelium discoideum</name>
    <name type="common">Social amoeba</name>
    <dbReference type="NCBI Taxonomy" id="44689"/>
    <lineage>
        <taxon>Eukaryota</taxon>
        <taxon>Amoebozoa</taxon>
        <taxon>Evosea</taxon>
        <taxon>Eumycetozoa</taxon>
        <taxon>Dictyostelia</taxon>
        <taxon>Dictyosteliales</taxon>
        <taxon>Dictyosteliaceae</taxon>
        <taxon>Dictyostelium</taxon>
    </lineage>
</organism>
<feature type="chain" id="PRO_0000384476" description="Ras guanine nucleotide exchange factor R">
    <location>
        <begin position="1"/>
        <end position="1721"/>
    </location>
</feature>
<feature type="domain" description="N-terminal Ras-GEF" evidence="2">
    <location>
        <begin position="1291"/>
        <end position="1411"/>
    </location>
</feature>
<feature type="domain" description="Ras-GEF" evidence="3">
    <location>
        <begin position="1447"/>
        <end position="1676"/>
    </location>
</feature>
<feature type="region of interest" description="Disordered" evidence="4">
    <location>
        <begin position="213"/>
        <end position="232"/>
    </location>
</feature>
<feature type="region of interest" description="Disordered" evidence="4">
    <location>
        <begin position="445"/>
        <end position="515"/>
    </location>
</feature>
<feature type="region of interest" description="Disordered" evidence="4">
    <location>
        <begin position="551"/>
        <end position="701"/>
    </location>
</feature>
<feature type="region of interest" description="Disordered" evidence="4">
    <location>
        <begin position="716"/>
        <end position="766"/>
    </location>
</feature>
<feature type="region of interest" description="Disordered" evidence="4">
    <location>
        <begin position="797"/>
        <end position="837"/>
    </location>
</feature>
<feature type="region of interest" description="Disordered" evidence="4">
    <location>
        <begin position="929"/>
        <end position="981"/>
    </location>
</feature>
<feature type="coiled-coil region" evidence="1">
    <location>
        <begin position="148"/>
        <end position="279"/>
    </location>
</feature>
<feature type="coiled-coil region" evidence="1">
    <location>
        <begin position="802"/>
        <end position="831"/>
    </location>
</feature>
<feature type="compositionally biased region" description="Basic and acidic residues" evidence="4">
    <location>
        <begin position="216"/>
        <end position="232"/>
    </location>
</feature>
<feature type="compositionally biased region" description="Low complexity" evidence="4">
    <location>
        <begin position="454"/>
        <end position="469"/>
    </location>
</feature>
<feature type="compositionally biased region" description="Low complexity" evidence="4">
    <location>
        <begin position="479"/>
        <end position="493"/>
    </location>
</feature>
<feature type="compositionally biased region" description="Low complexity" evidence="4">
    <location>
        <begin position="501"/>
        <end position="515"/>
    </location>
</feature>
<feature type="compositionally biased region" description="Low complexity" evidence="4">
    <location>
        <begin position="551"/>
        <end position="581"/>
    </location>
</feature>
<feature type="compositionally biased region" description="Polar residues" evidence="4">
    <location>
        <begin position="618"/>
        <end position="627"/>
    </location>
</feature>
<feature type="compositionally biased region" description="Low complexity" evidence="4">
    <location>
        <begin position="628"/>
        <end position="651"/>
    </location>
</feature>
<feature type="compositionally biased region" description="Low complexity" evidence="4">
    <location>
        <begin position="663"/>
        <end position="686"/>
    </location>
</feature>
<feature type="compositionally biased region" description="Basic and acidic residues" evidence="4">
    <location>
        <begin position="687"/>
        <end position="701"/>
    </location>
</feature>
<feature type="compositionally biased region" description="Low complexity" evidence="4">
    <location>
        <begin position="724"/>
        <end position="748"/>
    </location>
</feature>
<feature type="compositionally biased region" description="Low complexity" evidence="4">
    <location>
        <begin position="797"/>
        <end position="836"/>
    </location>
</feature>
<feature type="compositionally biased region" description="Low complexity" evidence="4">
    <location>
        <begin position="933"/>
        <end position="952"/>
    </location>
</feature>
<feature type="compositionally biased region" description="Polar residues" evidence="4">
    <location>
        <begin position="968"/>
        <end position="978"/>
    </location>
</feature>
<proteinExistence type="evidence at protein level"/>
<reference key="1">
    <citation type="journal article" date="2005" name="Genome Biol.">
        <title>The Dictyostelium genome encodes numerous RasGEFs with multiple biological roles.</title>
        <authorList>
            <person name="Wilkins A."/>
            <person name="Szafranski K."/>
            <person name="Fraser D.J."/>
            <person name="Bakthavatsalam D."/>
            <person name="Mueller R."/>
            <person name="Fisher P.R."/>
            <person name="Gloeckner G."/>
            <person name="Eichinger L."/>
            <person name="Noegel A.A."/>
            <person name="Insall R.H."/>
        </authorList>
    </citation>
    <scope>NUCLEOTIDE SEQUENCE [GENOMIC DNA]</scope>
    <scope>DEVELOPMENTAL STAGE</scope>
    <source>
        <strain>AX4</strain>
    </source>
</reference>
<reference key="2">
    <citation type="journal article" date="2002" name="Nature">
        <title>Sequence and analysis of chromosome 2 of Dictyostelium discoideum.</title>
        <authorList>
            <person name="Gloeckner G."/>
            <person name="Eichinger L."/>
            <person name="Szafranski K."/>
            <person name="Pachebat J.A."/>
            <person name="Bankier A.T."/>
            <person name="Dear P.H."/>
            <person name="Lehmann R."/>
            <person name="Baumgart C."/>
            <person name="Parra G."/>
            <person name="Abril J.F."/>
            <person name="Guigo R."/>
            <person name="Kumpf K."/>
            <person name="Tunggal B."/>
            <person name="Cox E.C."/>
            <person name="Quail M.A."/>
            <person name="Platzer M."/>
            <person name="Rosenthal A."/>
            <person name="Noegel A.A."/>
        </authorList>
    </citation>
    <scope>NUCLEOTIDE SEQUENCE [LARGE SCALE GENOMIC DNA]</scope>
    <source>
        <strain>AX4</strain>
    </source>
</reference>
<reference key="3">
    <citation type="journal article" date="2005" name="Nature">
        <title>The genome of the social amoeba Dictyostelium discoideum.</title>
        <authorList>
            <person name="Eichinger L."/>
            <person name="Pachebat J.A."/>
            <person name="Gloeckner G."/>
            <person name="Rajandream M.A."/>
            <person name="Sucgang R."/>
            <person name="Berriman M."/>
            <person name="Song J."/>
            <person name="Olsen R."/>
            <person name="Szafranski K."/>
            <person name="Xu Q."/>
            <person name="Tunggal B."/>
            <person name="Kummerfeld S."/>
            <person name="Madera M."/>
            <person name="Konfortov B.A."/>
            <person name="Rivero F."/>
            <person name="Bankier A.T."/>
            <person name="Lehmann R."/>
            <person name="Hamlin N."/>
            <person name="Davies R."/>
            <person name="Gaudet P."/>
            <person name="Fey P."/>
            <person name="Pilcher K."/>
            <person name="Chen G."/>
            <person name="Saunders D."/>
            <person name="Sodergren E.J."/>
            <person name="Davis P."/>
            <person name="Kerhornou A."/>
            <person name="Nie X."/>
            <person name="Hall N."/>
            <person name="Anjard C."/>
            <person name="Hemphill L."/>
            <person name="Bason N."/>
            <person name="Farbrother P."/>
            <person name="Desany B."/>
            <person name="Just E."/>
            <person name="Morio T."/>
            <person name="Rost R."/>
            <person name="Churcher C.M."/>
            <person name="Cooper J."/>
            <person name="Haydock S."/>
            <person name="van Driessche N."/>
            <person name="Cronin A."/>
            <person name="Goodhead I."/>
            <person name="Muzny D.M."/>
            <person name="Mourier T."/>
            <person name="Pain A."/>
            <person name="Lu M."/>
            <person name="Harper D."/>
            <person name="Lindsay R."/>
            <person name="Hauser H."/>
            <person name="James K.D."/>
            <person name="Quiles M."/>
            <person name="Madan Babu M."/>
            <person name="Saito T."/>
            <person name="Buchrieser C."/>
            <person name="Wardroper A."/>
            <person name="Felder M."/>
            <person name="Thangavelu M."/>
            <person name="Johnson D."/>
            <person name="Knights A."/>
            <person name="Loulseged H."/>
            <person name="Mungall K.L."/>
            <person name="Oliver K."/>
            <person name="Price C."/>
            <person name="Quail M.A."/>
            <person name="Urushihara H."/>
            <person name="Hernandez J."/>
            <person name="Rabbinowitsch E."/>
            <person name="Steffen D."/>
            <person name="Sanders M."/>
            <person name="Ma J."/>
            <person name="Kohara Y."/>
            <person name="Sharp S."/>
            <person name="Simmonds M.N."/>
            <person name="Spiegler S."/>
            <person name="Tivey A."/>
            <person name="Sugano S."/>
            <person name="White B."/>
            <person name="Walker D."/>
            <person name="Woodward J.R."/>
            <person name="Winckler T."/>
            <person name="Tanaka Y."/>
            <person name="Shaulsky G."/>
            <person name="Schleicher M."/>
            <person name="Weinstock G.M."/>
            <person name="Rosenthal A."/>
            <person name="Cox E.C."/>
            <person name="Chisholm R.L."/>
            <person name="Gibbs R.A."/>
            <person name="Loomis W.F."/>
            <person name="Platzer M."/>
            <person name="Kay R.R."/>
            <person name="Williams J.G."/>
            <person name="Dear P.H."/>
            <person name="Noegel A.A."/>
            <person name="Barrell B.G."/>
            <person name="Kuspa A."/>
        </authorList>
    </citation>
    <scope>NUCLEOTIDE SEQUENCE [LARGE SCALE GENOMIC DNA]</scope>
    <source>
        <strain>AX4</strain>
    </source>
</reference>
<reference key="4">
    <citation type="journal article" date="1996" name="Curr. Biol.">
        <title>The aimless RasGEF is required for processing of chemotactic signals through G-protein-coupled receptors in Dictyostelium.</title>
        <authorList>
            <person name="Insall R.H."/>
            <person name="Borleis J."/>
            <person name="Devreotes P.N."/>
        </authorList>
    </citation>
    <scope>NOMENCLATURE</scope>
    <source>
        <strain>AX3</strain>
    </source>
</reference>
<reference key="5">
    <citation type="journal article" date="2004" name="Proteomics">
        <title>The identification of Dictyostelium phosphoproteins altered in response to the activation of RasG.</title>
        <authorList>
            <person name="Secko D.M."/>
            <person name="Insall R.H."/>
            <person name="Spiegelman G.B."/>
            <person name="Weeks G."/>
        </authorList>
    </citation>
    <scope>PHOSPHORYLATION</scope>
    <scope>DISRUPTION PHENOTYPE</scope>
</reference>
<reference key="6">
    <citation type="journal article" date="2007" name="EMBO Rep.">
        <title>Cyclic AMP signalling in Dictyostelium: G-proteins activate separate Ras pathways using specific RasGEFs.</title>
        <authorList>
            <person name="Kae H."/>
            <person name="Kortholt A."/>
            <person name="Rehmann H."/>
            <person name="Insall R.H."/>
            <person name="Van Haastert P.J."/>
            <person name="Spiegelman G.B."/>
            <person name="Weeks G."/>
        </authorList>
    </citation>
    <scope>FUNCTION</scope>
</reference>
<gene>
    <name type="primary">gefR</name>
    <name type="synonym">rasGEFR</name>
    <name type="ORF">DDB_G0274605</name>
</gene>
<sequence length="1721" mass="193133">MKEEEIANLGPQEYFNYLEGINKKIIIELKTVANIDTAKDTDNLQNILIESSLALEHNIRNLLYFVDKCPISYDQIVHYHSHFKEVVKIFFQVCQDLIKAAQALILNSCDYLTTSNFAKCRGEAIKTIKNTMATCSNFEKLYYNPDLQLEDEVDLVHQQQQKEQEQQQKEQEQYEQEQLILKQLKEQELKKQQEQQQQQQQQQQQQQQQQQQQQQKHQEEKEKNDQKEKEEKLKKQLLAEQQKQKQEELERQQQQLQQQQQLLQQQQQLLQQQQQQQRSDPIIIPPITLKTSQSDLLSGGLSPKVNSPGSPNLGKFTESAERVANFDRGTANIILNMNKIKEISLSGDSEQAPEIVTAARIISENIAIISKELRYKTLGTNLSEHFVSVVQVARLAIKNKSDQFYQDQLELAIEKFNDTMRKIIYSVKSISKSSMNLRQFGVDESSLGRSPVVSPEKSISPSFTSSTSERILSHEIKNHNNNNNNYNNSSTNNLQTSFSTPSLSSNHSQQPNQQPLQSPLLINQLQSTSSSSSSSSSNLSNSLNSIQLPQATTTTTTATSPSTSTSTSTSTSPNSSSLSISDQDKQLKRKEKQHQIVIPKDVKDSVANQQQQQQQQQNGTTSPRNNESSVTAATTTTTSTTASITTNVNTIPNFPPNKQLPATPTTGTPSTSTPTPQTPTSTSQNDKQNENNNKENFVDKQKTLGKLFSKFVHKKRTPLPGFDSSNSSSPSNNSNTTNSSSHSSTNSSPMETSPGVESPKITKSPSQNNILVDSLDIGSDNQQQQQDKLTTTTSTTTITINNNNNNNNNNNNNNNNNNNNIQQQQQQQQQIPTTPNKLSNSIAMNSSNRLMTPKKERSFTIGLVSGKHSCVVVETPKSKKLFQHESAKQILSIISMNFPSFEKEFQMQNSEVISNIIEQIGNVIKNYHDEVSESSSSSSSSTTSPNNINTPSDCSPILNSENSKDSHNLSSINNSSYDPVSPALRKMYENGSYDSKEHSRSSIQSKITRKLGTIRKKGPSPFNMLLNSSTGSLSSLYLDQLNGGNGDSSSSSSSSYNLVGGSGISGYDNQNEIDASEHLVSTSSLFTEEAIELVSKCFEASIIVNHSGGTSSEIKALFSSTLDHLESMLQSSVNFGKIDPSSFCMTFLKNIRQHIPTMKSKGGKCDPTLVTAATKLFRHTILSNLDKSIHSLCHSVRVLAIQMTIIVISISAKPWDISSQLQLFASAKSFIDSLVSLLDAVENKIYISTNTNIQDDVEVPTIDDTEDTNIWEEADSPLTFGWISDEGSKTGRYVPKAGTLNKLISALTQDNKHDISRYTKTFLLTYQSFTNPWKLMEKLIQRYNVPLDEKPDVRATTQLRVVSFMQTWIERNFNDFDDQLIGQLKEFRTRLLMDNNNDLAVILGGLIKKKEAERSLSKERSTNHLTFPELMIPDGQKSPTALFLLLNESEIARQLTLIDFNIFSKIQPTELLDQSWNKDSLKFKSPNVIEMINRANKFSFWVSSQILWQEDIEERVKVFEKFILISKYLREMNNFNTLLAIFTGLNTAPILRLKKTFALLSPNSLSIYNSLEKLMNSSGSYKNYRSVSKNPPLLPYLPVILSDLTFMEDGNPDKINNLINFQKRELICRVISEVQQCQQQTKYEFPVVEPIHTLLTELPSSTPSELYQLSLIREPRETNQSNANSSISSGSNFLSNSSNHNIGNNNGFDTLKKYYKSSNNN</sequence>
<comment type="function">
    <text evidence="7">Promotes the exchange of Ras-bound GDP by GTP. May also play a role in the activation of rasG.</text>
</comment>
<comment type="developmental stage">
    <text evidence="6">Expressed during development; especially between 8-18 hours of development. Expressed (at protein level).</text>
</comment>
<comment type="PTM">
    <text evidence="5">Phosphorylated on threonine residues.</text>
</comment>
<comment type="disruption phenotype">
    <text evidence="5">Absence of the phosphoprotein gefR.</text>
</comment>
<comment type="caution">
    <text evidence="8">Was originally (PubMed:8793298) named RasGEFA, as it was the second RasGEF, after aimless, to be identified there. When aimless, aleA, was renamed gefA to make the nomenclature consistent and systematic, RasGEFA was renamed gefR.</text>
</comment>
<keyword id="KW-0175">Coiled coil</keyword>
<keyword id="KW-0344">Guanine-nucleotide releasing factor</keyword>
<keyword id="KW-0597">Phosphoprotein</keyword>
<keyword id="KW-1185">Reference proteome</keyword>
<name>GEFR_DICDI</name>